<organism>
    <name type="scientific">Homo sapiens</name>
    <name type="common">Human</name>
    <dbReference type="NCBI Taxonomy" id="9606"/>
    <lineage>
        <taxon>Eukaryota</taxon>
        <taxon>Metazoa</taxon>
        <taxon>Chordata</taxon>
        <taxon>Craniata</taxon>
        <taxon>Vertebrata</taxon>
        <taxon>Euteleostomi</taxon>
        <taxon>Mammalia</taxon>
        <taxon>Eutheria</taxon>
        <taxon>Euarchontoglires</taxon>
        <taxon>Primates</taxon>
        <taxon>Haplorrhini</taxon>
        <taxon>Catarrhini</taxon>
        <taxon>Hominidae</taxon>
        <taxon>Homo</taxon>
    </lineage>
</organism>
<keyword id="KW-0002">3D-structure</keyword>
<keyword id="KW-0121">Carboxypeptidase</keyword>
<keyword id="KW-0968">Cytoplasmic vesicle</keyword>
<keyword id="KW-0903">Direct protein sequencing</keyword>
<keyword id="KW-1015">Disulfide bond</keyword>
<keyword id="KW-0378">Hydrolase</keyword>
<keyword id="KW-0479">Metal-binding</keyword>
<keyword id="KW-0482">Metalloprotease</keyword>
<keyword id="KW-0645">Protease</keyword>
<keyword id="KW-1267">Proteomics identification</keyword>
<keyword id="KW-1185">Reference proteome</keyword>
<keyword id="KW-0964">Secreted</keyword>
<keyword id="KW-0732">Signal</keyword>
<keyword id="KW-0862">Zinc</keyword>
<keyword id="KW-0865">Zymogen</keyword>
<feature type="signal peptide" evidence="6 8">
    <location>
        <begin position="1"/>
        <end position="15"/>
    </location>
</feature>
<feature type="propeptide" id="PRO_0000004371" description="Activation peptide">
    <location>
        <begin position="16"/>
        <end position="110"/>
    </location>
</feature>
<feature type="chain" id="PRO_0000004372" description="Carboxypeptidase B">
    <location>
        <begin position="111"/>
        <end position="417"/>
    </location>
</feature>
<feature type="domain" description="Peptidase M14" evidence="4">
    <location>
        <begin position="118"/>
        <end position="412"/>
    </location>
</feature>
<feature type="active site" description="Proton donor/acceptor" evidence="4">
    <location>
        <position position="378"/>
    </location>
</feature>
<feature type="binding site" evidence="1">
    <location>
        <begin position="176"/>
        <end position="179"/>
    </location>
    <ligand>
        <name>substrate</name>
    </ligand>
</feature>
<feature type="binding site" evidence="4 5">
    <location>
        <position position="176"/>
    </location>
    <ligand>
        <name>Zn(2+)</name>
        <dbReference type="ChEBI" id="CHEBI:29105"/>
        <note>catalytic</note>
    </ligand>
</feature>
<feature type="binding site" evidence="4 5">
    <location>
        <position position="179"/>
    </location>
    <ligand>
        <name>Zn(2+)</name>
        <dbReference type="ChEBI" id="CHEBI:29105"/>
        <note>catalytic</note>
    </ligand>
</feature>
<feature type="binding site" evidence="1">
    <location>
        <position position="234"/>
    </location>
    <ligand>
        <name>substrate</name>
    </ligand>
</feature>
<feature type="binding site" evidence="1">
    <location>
        <begin position="251"/>
        <end position="252"/>
    </location>
    <ligand>
        <name>substrate</name>
    </ligand>
</feature>
<feature type="binding site" evidence="4 5">
    <location>
        <position position="304"/>
    </location>
    <ligand>
        <name>Zn(2+)</name>
        <dbReference type="ChEBI" id="CHEBI:29105"/>
        <note>catalytic</note>
    </ligand>
</feature>
<feature type="binding site" evidence="1">
    <location>
        <begin position="305"/>
        <end position="306"/>
    </location>
    <ligand>
        <name>substrate</name>
    </ligand>
</feature>
<feature type="binding site" evidence="1">
    <location>
        <position position="356"/>
    </location>
    <ligand>
        <name>substrate</name>
    </ligand>
</feature>
<feature type="disulfide bond" evidence="5">
    <location>
        <begin position="173"/>
        <end position="186"/>
    </location>
</feature>
<feature type="disulfide bond" evidence="5">
    <location>
        <begin position="245"/>
        <end position="268"/>
    </location>
</feature>
<feature type="disulfide bond" evidence="5">
    <location>
        <begin position="259"/>
        <end position="273"/>
    </location>
</feature>
<feature type="sequence variant" id="VAR_048598" description="In dbSNP:rs1059502." evidence="9">
    <original>D</original>
    <variation>N</variation>
    <location>
        <position position="208"/>
    </location>
</feature>
<feature type="sequence conflict" description="In Ref. 1; AA sequence." evidence="10" ref="1">
    <original>H</original>
    <variation>A</variation>
    <location>
        <position position="16"/>
    </location>
</feature>
<feature type="sequence conflict" description="In Ref. 1; AA sequence." evidence="10" ref="1">
    <original>H</original>
    <variation>Q</variation>
    <location>
        <position position="17"/>
    </location>
</feature>
<feature type="sequence conflict" description="In Ref. 6; AA sequence." evidence="10" ref="6">
    <original>H</original>
    <variation>Q</variation>
    <location>
        <position position="37"/>
    </location>
</feature>
<feature type="sequence conflict" description="In Ref. 1; AAA66973." evidence="10" ref="1">
    <location>
        <position position="245"/>
    </location>
</feature>
<feature type="helix" evidence="11">
    <location>
        <begin position="19"/>
        <end position="22"/>
    </location>
</feature>
<feature type="strand" evidence="11">
    <location>
        <begin position="26"/>
        <end position="32"/>
    </location>
</feature>
<feature type="helix" evidence="11">
    <location>
        <begin position="35"/>
        <end position="47"/>
    </location>
</feature>
<feature type="strand" evidence="11">
    <location>
        <begin position="50"/>
        <end position="57"/>
    </location>
</feature>
<feature type="helix" evidence="11">
    <location>
        <begin position="58"/>
        <end position="60"/>
    </location>
</feature>
<feature type="strand" evidence="11">
    <location>
        <begin position="63"/>
        <end position="71"/>
    </location>
</feature>
<feature type="helix" evidence="11">
    <location>
        <begin position="73"/>
        <end position="75"/>
    </location>
</feature>
<feature type="helix" evidence="11">
    <location>
        <begin position="76"/>
        <end position="85"/>
    </location>
</feature>
<feature type="strand" evidence="11">
    <location>
        <begin position="90"/>
        <end position="95"/>
    </location>
</feature>
<feature type="helix" evidence="11">
    <location>
        <begin position="97"/>
        <end position="103"/>
    </location>
</feature>
<feature type="strand" evidence="11">
    <location>
        <begin position="111"/>
        <end position="113"/>
    </location>
</feature>
<feature type="helix" evidence="11">
    <location>
        <begin position="122"/>
        <end position="135"/>
    </location>
</feature>
<feature type="turn" evidence="11">
    <location>
        <begin position="137"/>
        <end position="139"/>
    </location>
</feature>
<feature type="strand" evidence="11">
    <location>
        <begin position="140"/>
        <end position="147"/>
    </location>
</feature>
<feature type="strand" evidence="11">
    <location>
        <begin position="153"/>
        <end position="160"/>
    </location>
</feature>
<feature type="strand" evidence="11">
    <location>
        <begin position="168"/>
        <end position="172"/>
    </location>
</feature>
<feature type="helix" evidence="11">
    <location>
        <begin position="181"/>
        <end position="196"/>
    </location>
</feature>
<feature type="turn" evidence="11">
    <location>
        <begin position="197"/>
        <end position="199"/>
    </location>
</feature>
<feature type="helix" evidence="11">
    <location>
        <begin position="201"/>
        <end position="209"/>
    </location>
</feature>
<feature type="strand" evidence="11">
    <location>
        <begin position="211"/>
        <end position="216"/>
    </location>
</feature>
<feature type="helix" evidence="11">
    <location>
        <begin position="220"/>
        <end position="228"/>
    </location>
</feature>
<feature type="helix" evidence="11">
    <location>
        <begin position="250"/>
        <end position="252"/>
    </location>
</feature>
<feature type="strand" evidence="11">
    <location>
        <begin position="254"/>
        <end position="257"/>
    </location>
</feature>
<feature type="strand" evidence="11">
    <location>
        <begin position="260"/>
        <end position="262"/>
    </location>
</feature>
<feature type="helix" evidence="11">
    <location>
        <begin position="281"/>
        <end position="292"/>
    </location>
</feature>
<feature type="turn" evidence="11">
    <location>
        <begin position="293"/>
        <end position="296"/>
    </location>
</feature>
<feature type="strand" evidence="11">
    <location>
        <begin position="297"/>
        <end position="304"/>
    </location>
</feature>
<feature type="strand" evidence="11">
    <location>
        <begin position="309"/>
        <end position="313"/>
    </location>
</feature>
<feature type="strand" evidence="11">
    <location>
        <begin position="315"/>
        <end position="318"/>
    </location>
</feature>
<feature type="helix" evidence="11">
    <location>
        <begin position="324"/>
        <end position="342"/>
    </location>
</feature>
<feature type="strand" evidence="11">
    <location>
        <begin position="347"/>
        <end position="350"/>
    </location>
</feature>
<feature type="helix" evidence="11">
    <location>
        <begin position="351"/>
        <end position="354"/>
    </location>
</feature>
<feature type="helix" evidence="11">
    <location>
        <begin position="362"/>
        <end position="368"/>
    </location>
</feature>
<feature type="strand" evidence="11">
    <location>
        <begin position="372"/>
        <end position="378"/>
    </location>
</feature>
<feature type="strand" evidence="11">
    <location>
        <begin position="382"/>
        <end position="385"/>
    </location>
</feature>
<feature type="helix" evidence="11">
    <location>
        <begin position="386"/>
        <end position="388"/>
    </location>
</feature>
<feature type="helix" evidence="11">
    <location>
        <begin position="391"/>
        <end position="393"/>
    </location>
</feature>
<feature type="helix" evidence="11">
    <location>
        <begin position="394"/>
        <end position="413"/>
    </location>
</feature>
<name>CBPB1_HUMAN</name>
<gene>
    <name type="primary">CPB1</name>
    <name type="synonym">CPB</name>
    <name type="synonym">PCPB</name>
</gene>
<evidence type="ECO:0000250" key="1">
    <source>
        <dbReference type="UniProtKB" id="P00730"/>
    </source>
</evidence>
<evidence type="ECO:0000250" key="2">
    <source>
        <dbReference type="UniProtKB" id="P00732"/>
    </source>
</evidence>
<evidence type="ECO:0000250" key="3">
    <source>
        <dbReference type="UniProtKB" id="P55261"/>
    </source>
</evidence>
<evidence type="ECO:0000255" key="4">
    <source>
        <dbReference type="PROSITE-ProRule" id="PRU01379"/>
    </source>
</evidence>
<evidence type="ECO:0000269" key="5">
    <source>
    </source>
</evidence>
<evidence type="ECO:0000269" key="6">
    <source>
    </source>
</evidence>
<evidence type="ECO:0000269" key="7">
    <source>
    </source>
</evidence>
<evidence type="ECO:0000269" key="8">
    <source>
    </source>
</evidence>
<evidence type="ECO:0000269" key="9">
    <source>
    </source>
</evidence>
<evidence type="ECO:0000305" key="10"/>
<evidence type="ECO:0007829" key="11">
    <source>
        <dbReference type="PDB" id="1KWM"/>
    </source>
</evidence>
<proteinExistence type="evidence at protein level"/>
<sequence length="417" mass="47368">MLALLVLVTVALASAHHGGEHFEGEKVFRVNVEDENHINIIRELASTTQIDFWKPDSVTQIKPHSTVDFRVKAEDTVTVENVLKQNELQYKVLISNLRNVVEAQFDSRVRATGHSYEKYNKWETIEAWTQQVATENPALISRSVIGTTFEGRAIYLLKVGKAGQNKPAIFMDCGFHAREWISPAFCQWFVREAVRTYGREIQVTELLDKLDFYVLPVLNIDGYIYTWTKSRFWRKTRSTHTGSSCIGTDPNRNFDAGWCEIGASRNPCDETYCGPAAESEKETKALADFIRNKLSSIKAYLTIHSYSQMMIYPYSYAYKLGENNAELNALAKATVKELASLHGTKYTYGPGATTIYPAAGGSDDWAYDQGIRYSFTFELRDTGRYGFLLPESQIRATCEETFLAIKYVASYVLEHLY</sequence>
<reference key="1">
    <citation type="journal article" date="1992" name="J. Biol. Chem.">
        <title>Isolation of a cDNA encoding a human serum marker for acute pancreatitis. Identification of pancreas-specific protein as pancreatic procarboxypeptidase B.</title>
        <authorList>
            <person name="Yamamoto K.K."/>
            <person name="Pousette A."/>
            <person name="Chow P."/>
            <person name="Wilson H."/>
            <person name="el Shami S."/>
            <person name="French C.K."/>
        </authorList>
    </citation>
    <scope>NUCLEOTIDE SEQUENCE [MRNA]</scope>
    <scope>PROTEIN SEQUENCE OF 16-40</scope>
    <source>
        <tissue>Pancreas</tissue>
    </source>
</reference>
<reference key="2">
    <citation type="journal article" date="1998" name="Biol. Chem.">
        <title>Comparative analysis of the sequences and three-dimensional models of human procarboxypeptidases A1, A2 and B.</title>
        <authorList>
            <person name="Aloy P."/>
            <person name="Catasus L."/>
            <person name="Villegas V."/>
            <person name="Reverter D."/>
            <person name="Vendrell J."/>
            <person name="Aviles F.X."/>
        </authorList>
    </citation>
    <scope>NUCLEOTIDE SEQUENCE [MRNA]</scope>
    <scope>VARIANT ASN-208</scope>
    <source>
        <tissue>Pancreas</tissue>
    </source>
</reference>
<reference key="3">
    <citation type="submission" date="2003-08" db="EMBL/GenBank/DDBJ databases">
        <title>Cloning of human full-length CDSs in BD Creator(TM) system donor vector.</title>
        <authorList>
            <person name="Kalnine N."/>
            <person name="Chen X."/>
            <person name="Rolfs A."/>
            <person name="Halleck A."/>
            <person name="Hines L."/>
            <person name="Eisenstein S."/>
            <person name="Koundinya M."/>
            <person name="Raphael J."/>
            <person name="Moreira D."/>
            <person name="Kelley T."/>
            <person name="LaBaer J."/>
            <person name="Lin Y."/>
            <person name="Phelan M."/>
            <person name="Farmer A."/>
        </authorList>
    </citation>
    <scope>NUCLEOTIDE SEQUENCE [LARGE SCALE MRNA]</scope>
</reference>
<reference key="4">
    <citation type="submission" date="2005-09" db="EMBL/GenBank/DDBJ databases">
        <authorList>
            <person name="Mural R.J."/>
            <person name="Istrail S."/>
            <person name="Sutton G.G."/>
            <person name="Florea L."/>
            <person name="Halpern A.L."/>
            <person name="Mobarry C.M."/>
            <person name="Lippert R."/>
            <person name="Walenz B."/>
            <person name="Shatkay H."/>
            <person name="Dew I."/>
            <person name="Miller J.R."/>
            <person name="Flanigan M.J."/>
            <person name="Edwards N.J."/>
            <person name="Bolanos R."/>
            <person name="Fasulo D."/>
            <person name="Halldorsson B.V."/>
            <person name="Hannenhalli S."/>
            <person name="Turner R."/>
            <person name="Yooseph S."/>
            <person name="Lu F."/>
            <person name="Nusskern D.R."/>
            <person name="Shue B.C."/>
            <person name="Zheng X.H."/>
            <person name="Zhong F."/>
            <person name="Delcher A.L."/>
            <person name="Huson D.H."/>
            <person name="Kravitz S.A."/>
            <person name="Mouchard L."/>
            <person name="Reinert K."/>
            <person name="Remington K.A."/>
            <person name="Clark A.G."/>
            <person name="Waterman M.S."/>
            <person name="Eichler E.E."/>
            <person name="Adams M.D."/>
            <person name="Hunkapiller M.W."/>
            <person name="Myers E.W."/>
            <person name="Venter J.C."/>
        </authorList>
    </citation>
    <scope>NUCLEOTIDE SEQUENCE [LARGE SCALE GENOMIC DNA]</scope>
</reference>
<reference key="5">
    <citation type="journal article" date="2004" name="Genome Res.">
        <title>The status, quality, and expansion of the NIH full-length cDNA project: the Mammalian Gene Collection (MGC).</title>
        <authorList>
            <consortium name="The MGC Project Team"/>
        </authorList>
    </citation>
    <scope>NUCLEOTIDE SEQUENCE [LARGE SCALE MRNA]</scope>
    <source>
        <tissue>Adrenal gland</tissue>
    </source>
</reference>
<reference key="6">
    <citation type="journal article" date="1989" name="Eur. J. Biochem.">
        <title>Purification and properties of five different forms of human procarboxypeptidases.</title>
        <authorList>
            <person name="Pascual R."/>
            <person name="Burgos F.J."/>
            <person name="Salva M."/>
            <person name="Soriano F."/>
            <person name="Mendez E."/>
            <person name="Aviles F.X."/>
        </authorList>
    </citation>
    <scope>PROTEIN SEQUENCE OF 16-43</scope>
    <scope>TISSUE SPECIFICITY</scope>
    <source>
        <tissue>Pancreas</tissue>
    </source>
</reference>
<reference key="7">
    <citation type="journal article" date="2010" name="J. Mol. Biol.">
        <title>Structure-function analysis of the short splicing variant carboxypeptidase encoded by Drosophila melanogaster silver.</title>
        <authorList>
            <person name="Tanco S."/>
            <person name="Arolas J.L."/>
            <person name="Guevara T."/>
            <person name="Lorenzo J."/>
            <person name="Aviles F.X."/>
            <person name="Gomis-Ruth F.X."/>
        </authorList>
    </citation>
    <scope>CATALYTIC ACTIVITY</scope>
</reference>
<reference key="8">
    <citation type="journal article" date="2002" name="J. Mol. Biol.">
        <title>Human procarboxypeptidase B: three-dimensional structure and implications for thrombin-activatable fibrinolysis inhibitor (TAFI).</title>
        <authorList>
            <person name="Barbosa-Pereira P.J."/>
            <person name="Segura-Martin S."/>
            <person name="Oliva B."/>
            <person name="Ferrer-Orta C."/>
            <person name="Aviles F.X."/>
            <person name="Coll M."/>
            <person name="Gomis-Ruth F.X."/>
            <person name="Vendrell J."/>
        </authorList>
    </citation>
    <scope>X-RAY CRYSTALLOGRAPHY (1.60 ANGSTROMS) OF 16-417 IN COMPLEX WITH ZINC</scope>
    <scope>DISULFIDE BONDS</scope>
    <scope>COFACTOR</scope>
</reference>
<dbReference type="EC" id="3.4.17.2" evidence="7"/>
<dbReference type="EMBL" id="M81057">
    <property type="protein sequence ID" value="AAA66973.1"/>
    <property type="molecule type" value="mRNA"/>
</dbReference>
<dbReference type="EMBL" id="AJ224866">
    <property type="protein sequence ID" value="CAA12163.1"/>
    <property type="molecule type" value="mRNA"/>
</dbReference>
<dbReference type="EMBL" id="BT009910">
    <property type="protein sequence ID" value="AAP88912.1"/>
    <property type="molecule type" value="mRNA"/>
</dbReference>
<dbReference type="EMBL" id="CH471052">
    <property type="protein sequence ID" value="EAW78903.1"/>
    <property type="molecule type" value="Genomic_DNA"/>
</dbReference>
<dbReference type="EMBL" id="BC015338">
    <property type="protein sequence ID" value="AAH15338.1"/>
    <property type="molecule type" value="mRNA"/>
</dbReference>
<dbReference type="CCDS" id="CCDS33874.1"/>
<dbReference type="PIR" id="A42332">
    <property type="entry name" value="A42332"/>
</dbReference>
<dbReference type="RefSeq" id="NP_001862.2">
    <property type="nucleotide sequence ID" value="NM_001871.3"/>
</dbReference>
<dbReference type="PDB" id="1KWM">
    <property type="method" value="X-ray"/>
    <property type="resolution" value="1.60 A"/>
    <property type="chains" value="A/B=16-417"/>
</dbReference>
<dbReference type="PDB" id="1ZLI">
    <property type="method" value="X-ray"/>
    <property type="resolution" value="2.09 A"/>
    <property type="chains" value="A=109-417"/>
</dbReference>
<dbReference type="PDBsum" id="1KWM"/>
<dbReference type="PDBsum" id="1ZLI"/>
<dbReference type="SMR" id="P15086"/>
<dbReference type="BioGRID" id="107752">
    <property type="interactions" value="1"/>
</dbReference>
<dbReference type="FunCoup" id="P15086">
    <property type="interactions" value="158"/>
</dbReference>
<dbReference type="IntAct" id="P15086">
    <property type="interactions" value="1"/>
</dbReference>
<dbReference type="STRING" id="9606.ENSP00000417222"/>
<dbReference type="BindingDB" id="P15086"/>
<dbReference type="ChEMBL" id="CHEMBL2552"/>
<dbReference type="DrugBank" id="DB07182">
    <property type="generic name" value="(2S)-2-(3-Carbamimidamidophenyl)-3-[hydroxy(3-phenylpropyl)phosphoryl]propanoic acid"/>
</dbReference>
<dbReference type="DrugBank" id="DB07269">
    <property type="generic name" value="(2S)-2-[3-(AMINOMETHYL)PHENYL]-3-[(R)-[(1R)-1-{[(BENZYLOXY)CARBONYL]AMINO}-2-METHYLPROPYL](HYDROXY)PHOSPHORYL]PROPANOIC ACID"/>
</dbReference>
<dbReference type="DrugBank" id="DB06921">
    <property type="generic name" value="(2S)-2-[3-(AMINOMETHYL)PHENYL]-3-[(R)-HYDROXY{(1R)-2-METHYL-1-[(PHENYLSULFONYL)AMINO]PROPYL}PHOSPHORYL]PROPANOIC ACID"/>
</dbReference>
<dbReference type="DrugBank" id="DB06835">
    <property type="generic name" value="(2S)-2-[3-(AMINOMETHYL)PHENYL]-3-{(S)-HYDROXY[(1R)-2-METHYL-1-{[(2-PHENYLETHYL)SULFONYL]AMINO}PROPYL]PHOSPHORYL}PROPANOIC ACID"/>
</dbReference>
<dbReference type="DrugBank" id="DB07157">
    <property type="generic name" value="(5R,6S,8S)-8-[3-(AMINOMETHYL)PHENYL]-6-HYDROXY-5-ISOPROPYL-3-OXO-1-PHENYL-2,7-DIOXA-4-AZA-6-PHOSPHANONAN-9-OIC ACID 6-OXIDE"/>
</dbReference>
<dbReference type="DrugBank" id="DB04723">
    <property type="generic name" value="2-(3-GUANIDINOPHENYL)-3-MERCAPTOPROPANOIC ACID"/>
</dbReference>
<dbReference type="DrugBank" id="DB07136">
    <property type="generic name" value="BX-528"/>
</dbReference>
<dbReference type="DrugBank" id="DB04272">
    <property type="generic name" value="Citric acid"/>
</dbReference>
<dbReference type="GuidetoPHARMACOLOGY" id="1593"/>
<dbReference type="MEROPS" id="M14.003"/>
<dbReference type="GlyGen" id="P15086">
    <property type="glycosylation" value="2 sites"/>
</dbReference>
<dbReference type="PhosphoSitePlus" id="P15086"/>
<dbReference type="BioMuta" id="CPB1"/>
<dbReference type="DMDM" id="20532382"/>
<dbReference type="MassIVE" id="P15086"/>
<dbReference type="PaxDb" id="9606-ENSP00000417222"/>
<dbReference type="PeptideAtlas" id="P15086"/>
<dbReference type="ProteomicsDB" id="53104"/>
<dbReference type="Antibodypedia" id="18185">
    <property type="antibodies" value="413 antibodies from 35 providers"/>
</dbReference>
<dbReference type="DNASU" id="1360"/>
<dbReference type="Ensembl" id="ENST00000282957.9">
    <property type="protein sequence ID" value="ENSP00000282957.4"/>
    <property type="gene ID" value="ENSG00000153002.12"/>
</dbReference>
<dbReference type="Ensembl" id="ENST00000491148.5">
    <property type="protein sequence ID" value="ENSP00000417222.1"/>
    <property type="gene ID" value="ENSG00000153002.12"/>
</dbReference>
<dbReference type="GeneID" id="1360"/>
<dbReference type="KEGG" id="hsa:1360"/>
<dbReference type="MANE-Select" id="ENST00000282957.9">
    <property type="protein sequence ID" value="ENSP00000282957.4"/>
    <property type="RefSeq nucleotide sequence ID" value="NM_001871.3"/>
    <property type="RefSeq protein sequence ID" value="NP_001862.2"/>
</dbReference>
<dbReference type="UCSC" id="uc003ewl.4">
    <property type="organism name" value="human"/>
</dbReference>
<dbReference type="AGR" id="HGNC:2299"/>
<dbReference type="CTD" id="1360"/>
<dbReference type="DisGeNET" id="1360"/>
<dbReference type="GeneCards" id="CPB1"/>
<dbReference type="HGNC" id="HGNC:2299">
    <property type="gene designation" value="CPB1"/>
</dbReference>
<dbReference type="HPA" id="ENSG00000153002">
    <property type="expression patterns" value="Tissue enriched (pancreas)"/>
</dbReference>
<dbReference type="MIM" id="114852">
    <property type="type" value="gene"/>
</dbReference>
<dbReference type="neXtProt" id="NX_P15086"/>
<dbReference type="OpenTargets" id="ENSG00000153002"/>
<dbReference type="PharmGKB" id="PA26821"/>
<dbReference type="VEuPathDB" id="HostDB:ENSG00000153002"/>
<dbReference type="eggNOG" id="KOG2650">
    <property type="taxonomic scope" value="Eukaryota"/>
</dbReference>
<dbReference type="GeneTree" id="ENSGT00940000157819"/>
<dbReference type="HOGENOM" id="CLU_019326_0_0_1"/>
<dbReference type="InParanoid" id="P15086"/>
<dbReference type="OMA" id="WPYKWEG"/>
<dbReference type="OrthoDB" id="3626597at2759"/>
<dbReference type="PAN-GO" id="P15086">
    <property type="GO annotations" value="3 GO annotations based on evolutionary models"/>
</dbReference>
<dbReference type="PhylomeDB" id="P15086"/>
<dbReference type="TreeFam" id="TF317197"/>
<dbReference type="BRENDA" id="3.4.17.2">
    <property type="organism ID" value="2681"/>
</dbReference>
<dbReference type="PathwayCommons" id="P15086"/>
<dbReference type="Reactome" id="R-HSA-2022377">
    <property type="pathway name" value="Metabolism of Angiotensinogen to Angiotensins"/>
</dbReference>
<dbReference type="Reactome" id="R-HSA-9925561">
    <property type="pathway name" value="Developmental Lineage of Pancreatic Acinar Cells"/>
</dbReference>
<dbReference type="SignaLink" id="P15086"/>
<dbReference type="BioGRID-ORCS" id="1360">
    <property type="hits" value="15 hits in 1143 CRISPR screens"/>
</dbReference>
<dbReference type="ChiTaRS" id="CPB1">
    <property type="organism name" value="human"/>
</dbReference>
<dbReference type="EvolutionaryTrace" id="P15086"/>
<dbReference type="GenomeRNAi" id="1360"/>
<dbReference type="Pharos" id="P15086">
    <property type="development level" value="Tchem"/>
</dbReference>
<dbReference type="PRO" id="PR:P15086"/>
<dbReference type="Proteomes" id="UP000005640">
    <property type="component" value="Chromosome 3"/>
</dbReference>
<dbReference type="RNAct" id="P15086">
    <property type="molecule type" value="protein"/>
</dbReference>
<dbReference type="Bgee" id="ENSG00000153002">
    <property type="expression patterns" value="Expressed in body of pancreas and 95 other cell types or tissues"/>
</dbReference>
<dbReference type="ExpressionAtlas" id="P15086">
    <property type="expression patterns" value="baseline and differential"/>
</dbReference>
<dbReference type="GO" id="GO:0031410">
    <property type="term" value="C:cytoplasmic vesicle"/>
    <property type="evidence" value="ECO:0007669"/>
    <property type="project" value="UniProtKB-KW"/>
</dbReference>
<dbReference type="GO" id="GO:0005615">
    <property type="term" value="C:extracellular space"/>
    <property type="evidence" value="ECO:0000318"/>
    <property type="project" value="GO_Central"/>
</dbReference>
<dbReference type="GO" id="GO:0004180">
    <property type="term" value="F:carboxypeptidase activity"/>
    <property type="evidence" value="ECO:0000314"/>
    <property type="project" value="MGI"/>
</dbReference>
<dbReference type="GO" id="GO:0004181">
    <property type="term" value="F:metallocarboxypeptidase activity"/>
    <property type="evidence" value="ECO:0000318"/>
    <property type="project" value="GO_Central"/>
</dbReference>
<dbReference type="GO" id="GO:0008270">
    <property type="term" value="F:zinc ion binding"/>
    <property type="evidence" value="ECO:0007669"/>
    <property type="project" value="InterPro"/>
</dbReference>
<dbReference type="GO" id="GO:0006508">
    <property type="term" value="P:proteolysis"/>
    <property type="evidence" value="ECO:0000314"/>
    <property type="project" value="MGI"/>
</dbReference>
<dbReference type="CDD" id="cd03871">
    <property type="entry name" value="M14_CPB"/>
    <property type="match status" value="1"/>
</dbReference>
<dbReference type="FunFam" id="3.30.70.340:FF:000002">
    <property type="entry name" value="Carboxypeptidase A"/>
    <property type="match status" value="1"/>
</dbReference>
<dbReference type="FunFam" id="3.40.630.10:FF:000001">
    <property type="entry name" value="Carboxypeptidase B"/>
    <property type="match status" value="1"/>
</dbReference>
<dbReference type="Gene3D" id="3.30.70.340">
    <property type="entry name" value="Metallocarboxypeptidase-like"/>
    <property type="match status" value="1"/>
</dbReference>
<dbReference type="Gene3D" id="3.40.630.10">
    <property type="entry name" value="Zn peptidases"/>
    <property type="match status" value="1"/>
</dbReference>
<dbReference type="InterPro" id="IPR034253">
    <property type="entry name" value="CPB_M14_CPD"/>
</dbReference>
<dbReference type="InterPro" id="IPR036990">
    <property type="entry name" value="M14A-like_propep"/>
</dbReference>
<dbReference type="InterPro" id="IPR003146">
    <property type="entry name" value="M14A_act_pep"/>
</dbReference>
<dbReference type="InterPro" id="IPR000834">
    <property type="entry name" value="Peptidase_M14"/>
</dbReference>
<dbReference type="PANTHER" id="PTHR11705:SF20">
    <property type="entry name" value="CARBOXYPEPTIDASE B"/>
    <property type="match status" value="1"/>
</dbReference>
<dbReference type="PANTHER" id="PTHR11705">
    <property type="entry name" value="PROTEASE FAMILY M14 CARBOXYPEPTIDASE A,B"/>
    <property type="match status" value="1"/>
</dbReference>
<dbReference type="Pfam" id="PF00246">
    <property type="entry name" value="Peptidase_M14"/>
    <property type="match status" value="1"/>
</dbReference>
<dbReference type="Pfam" id="PF02244">
    <property type="entry name" value="Propep_M14"/>
    <property type="match status" value="1"/>
</dbReference>
<dbReference type="PRINTS" id="PR00765">
    <property type="entry name" value="CRBOXYPTASEA"/>
</dbReference>
<dbReference type="SMART" id="SM00631">
    <property type="entry name" value="Zn_pept"/>
    <property type="match status" value="1"/>
</dbReference>
<dbReference type="SUPFAM" id="SSF54897">
    <property type="entry name" value="Protease propeptides/inhibitors"/>
    <property type="match status" value="1"/>
</dbReference>
<dbReference type="SUPFAM" id="SSF53187">
    <property type="entry name" value="Zn-dependent exopeptidases"/>
    <property type="match status" value="1"/>
</dbReference>
<dbReference type="PROSITE" id="PS00132">
    <property type="entry name" value="CARBOXYPEPT_ZN_1"/>
    <property type="match status" value="1"/>
</dbReference>
<dbReference type="PROSITE" id="PS00133">
    <property type="entry name" value="CARBOXYPEPT_ZN_2"/>
    <property type="match status" value="1"/>
</dbReference>
<dbReference type="PROSITE" id="PS52035">
    <property type="entry name" value="PEPTIDASE_M14"/>
    <property type="match status" value="1"/>
</dbReference>
<protein>
    <recommendedName>
        <fullName>Carboxypeptidase B</fullName>
        <ecNumber evidence="7">3.4.17.2</ecNumber>
    </recommendedName>
    <alternativeName>
        <fullName>Pancreas-specific protein</fullName>
        <shortName>PASP</shortName>
    </alternativeName>
</protein>
<accession>P15086</accession>
<accession>O60834</accession>
<accession>Q53XJ0</accession>
<accession>Q96BQ8</accession>
<comment type="catalytic activity">
    <reaction evidence="7">
        <text>Preferential release of a C-terminal lysine or arginine amino acid.</text>
        <dbReference type="EC" id="3.4.17.2"/>
    </reaction>
</comment>
<comment type="cofactor">
    <cofactor evidence="5">
        <name>Zn(2+)</name>
        <dbReference type="ChEBI" id="CHEBI:29105"/>
    </cofactor>
    <text evidence="5">Binds 1 zinc ion per subunit.</text>
</comment>
<comment type="interaction">
    <interactant intactId="EBI-25936844">
        <id>P15086</id>
    </interactant>
    <interactant intactId="EBI-77613">
        <id>P05067</id>
        <label>APP</label>
    </interactant>
    <organismsDiffer>false</organismsDiffer>
    <experiments>3</experiments>
</comment>
<comment type="subcellular location">
    <subcellularLocation>
        <location evidence="2">Secreted</location>
    </subcellularLocation>
    <subcellularLocation>
        <location evidence="3">Zymogen granule lumen</location>
    </subcellularLocation>
</comment>
<comment type="tissue specificity">
    <text evidence="8">Pancreas.</text>
</comment>
<comment type="similarity">
    <text evidence="10">Belongs to the peptidase M14 family.</text>
</comment>